<accession>Q9ZSA8</accession>
<organism>
    <name type="scientific">Arabidopsis thaliana</name>
    <name type="common">Mouse-ear cress</name>
    <dbReference type="NCBI Taxonomy" id="3702"/>
    <lineage>
        <taxon>Eukaryota</taxon>
        <taxon>Viridiplantae</taxon>
        <taxon>Streptophyta</taxon>
        <taxon>Embryophyta</taxon>
        <taxon>Tracheophyta</taxon>
        <taxon>Spermatophyta</taxon>
        <taxon>Magnoliopsida</taxon>
        <taxon>eudicotyledons</taxon>
        <taxon>Gunneridae</taxon>
        <taxon>Pentapetalae</taxon>
        <taxon>rosids</taxon>
        <taxon>malvids</taxon>
        <taxon>Brassicales</taxon>
        <taxon>Brassicaceae</taxon>
        <taxon>Camelineae</taxon>
        <taxon>Arabidopsis</taxon>
    </lineage>
</organism>
<dbReference type="EC" id="1.14.11.-" evidence="2"/>
<dbReference type="EC" id="1.14.13.-" evidence="4"/>
<dbReference type="EMBL" id="AF118222">
    <property type="protein sequence ID" value="AAD03425.1"/>
    <property type="molecule type" value="Genomic_DNA"/>
</dbReference>
<dbReference type="EMBL" id="AL049524">
    <property type="protein sequence ID" value="CAB40043.1"/>
    <property type="molecule type" value="Genomic_DNA"/>
</dbReference>
<dbReference type="EMBL" id="AL161517">
    <property type="protein sequence ID" value="CAB78173.1"/>
    <property type="molecule type" value="Genomic_DNA"/>
</dbReference>
<dbReference type="EMBL" id="CP002687">
    <property type="protein sequence ID" value="AEE82891.1"/>
    <property type="molecule type" value="Genomic_DNA"/>
</dbReference>
<dbReference type="EMBL" id="BT010537">
    <property type="protein sequence ID" value="AAQ65160.1"/>
    <property type="molecule type" value="mRNA"/>
</dbReference>
<dbReference type="EMBL" id="AK176678">
    <property type="protein sequence ID" value="BAD44441.1"/>
    <property type="molecule type" value="mRNA"/>
</dbReference>
<dbReference type="EMBL" id="AK176911">
    <property type="protein sequence ID" value="BAD44674.1"/>
    <property type="molecule type" value="mRNA"/>
</dbReference>
<dbReference type="PIR" id="T04185">
    <property type="entry name" value="T04185"/>
</dbReference>
<dbReference type="RefSeq" id="NP_192788.1">
    <property type="nucleotide sequence ID" value="NM_117118.5"/>
</dbReference>
<dbReference type="SMR" id="Q9ZSA8"/>
<dbReference type="FunCoup" id="Q9ZSA8">
    <property type="interactions" value="15"/>
</dbReference>
<dbReference type="IntAct" id="Q9ZSA8">
    <property type="interactions" value="2"/>
</dbReference>
<dbReference type="STRING" id="3702.Q9ZSA8"/>
<dbReference type="PaxDb" id="3702-AT4G10500.1"/>
<dbReference type="ProteomicsDB" id="222220"/>
<dbReference type="EnsemblPlants" id="AT4G10500.1">
    <property type="protein sequence ID" value="AT4G10500.1"/>
    <property type="gene ID" value="AT4G10500"/>
</dbReference>
<dbReference type="GeneID" id="826642"/>
<dbReference type="Gramene" id="AT4G10500.1">
    <property type="protein sequence ID" value="AT4G10500.1"/>
    <property type="gene ID" value="AT4G10500"/>
</dbReference>
<dbReference type="KEGG" id="ath:AT4G10500"/>
<dbReference type="Araport" id="AT4G10500"/>
<dbReference type="TAIR" id="AT4G10500">
    <property type="gene designation" value="DLO1"/>
</dbReference>
<dbReference type="eggNOG" id="KOG0143">
    <property type="taxonomic scope" value="Eukaryota"/>
</dbReference>
<dbReference type="HOGENOM" id="CLU_010119_16_3_1"/>
<dbReference type="InParanoid" id="Q9ZSA8"/>
<dbReference type="OMA" id="WDKFWDR"/>
<dbReference type="PhylomeDB" id="Q9ZSA8"/>
<dbReference type="BioCyc" id="ARA:AT4G10500-MONOMER"/>
<dbReference type="PRO" id="PR:Q9ZSA8"/>
<dbReference type="Proteomes" id="UP000006548">
    <property type="component" value="Chromosome 4"/>
</dbReference>
<dbReference type="ExpressionAtlas" id="Q9ZSA8">
    <property type="expression patterns" value="baseline and differential"/>
</dbReference>
<dbReference type="GO" id="GO:0051213">
    <property type="term" value="F:dioxygenase activity"/>
    <property type="evidence" value="ECO:0007669"/>
    <property type="project" value="UniProtKB-KW"/>
</dbReference>
<dbReference type="GO" id="GO:0046872">
    <property type="term" value="F:metal ion binding"/>
    <property type="evidence" value="ECO:0007669"/>
    <property type="project" value="UniProtKB-KW"/>
</dbReference>
<dbReference type="GO" id="GO:0002229">
    <property type="term" value="P:defense response to oomycetes"/>
    <property type="evidence" value="ECO:0000315"/>
    <property type="project" value="UniProtKB"/>
</dbReference>
<dbReference type="GO" id="GO:0010150">
    <property type="term" value="P:leaf senescence"/>
    <property type="evidence" value="ECO:0000315"/>
    <property type="project" value="UniProtKB"/>
</dbReference>
<dbReference type="GO" id="GO:0009617">
    <property type="term" value="P:response to bacterium"/>
    <property type="evidence" value="ECO:0000270"/>
    <property type="project" value="UniProtKB"/>
</dbReference>
<dbReference type="GO" id="GO:0009620">
    <property type="term" value="P:response to fungus"/>
    <property type="evidence" value="ECO:0000270"/>
    <property type="project" value="UniProtKB"/>
</dbReference>
<dbReference type="GO" id="GO:0002239">
    <property type="term" value="P:response to oomycetes"/>
    <property type="evidence" value="ECO:0000270"/>
    <property type="project" value="UniProtKB"/>
</dbReference>
<dbReference type="GO" id="GO:0009751">
    <property type="term" value="P:response to salicylic acid"/>
    <property type="evidence" value="ECO:0000270"/>
    <property type="project" value="UniProtKB"/>
</dbReference>
<dbReference type="GO" id="GO:0046244">
    <property type="term" value="P:salicylic acid catabolic process"/>
    <property type="evidence" value="ECO:0000314"/>
    <property type="project" value="UniProtKB"/>
</dbReference>
<dbReference type="FunFam" id="2.60.120.330:FF:000007">
    <property type="entry name" value="Protein DMR6-like oxygenase 2"/>
    <property type="match status" value="1"/>
</dbReference>
<dbReference type="Gene3D" id="2.60.120.330">
    <property type="entry name" value="B-lactam Antibiotic, Isopenicillin N Synthase, Chain"/>
    <property type="match status" value="1"/>
</dbReference>
<dbReference type="InterPro" id="IPR026992">
    <property type="entry name" value="DIOX_N"/>
</dbReference>
<dbReference type="InterPro" id="IPR044861">
    <property type="entry name" value="IPNS-like_FE2OG_OXY"/>
</dbReference>
<dbReference type="InterPro" id="IPR027443">
    <property type="entry name" value="IPNS-like_sf"/>
</dbReference>
<dbReference type="InterPro" id="IPR005123">
    <property type="entry name" value="Oxoglu/Fe-dep_dioxygenase_dom"/>
</dbReference>
<dbReference type="InterPro" id="IPR050295">
    <property type="entry name" value="Plant_2OG-oxidoreductases"/>
</dbReference>
<dbReference type="PANTHER" id="PTHR47991">
    <property type="entry name" value="OXOGLUTARATE/IRON-DEPENDENT DIOXYGENASE"/>
    <property type="match status" value="1"/>
</dbReference>
<dbReference type="Pfam" id="PF03171">
    <property type="entry name" value="2OG-FeII_Oxy"/>
    <property type="match status" value="1"/>
</dbReference>
<dbReference type="Pfam" id="PF14226">
    <property type="entry name" value="DIOX_N"/>
    <property type="match status" value="1"/>
</dbReference>
<dbReference type="SUPFAM" id="SSF51197">
    <property type="entry name" value="Clavaminate synthase-like"/>
    <property type="match status" value="1"/>
</dbReference>
<dbReference type="PROSITE" id="PS51471">
    <property type="entry name" value="FE2OG_OXY"/>
    <property type="match status" value="1"/>
</dbReference>
<sequence>MATSAISKLLVSDFASSVHIPSNYVRPISDRPNLSEVESSGDSIPLIDLRDLHGPNRAVIVQQLASACSTYGFFQIKNHGVPDTTVNKMQTVAREFFHQPESERVKHYSADPTKTTRLSTSFNVGADKVLNWRDFLRLHCFPIEDFIEEWPSSPISFREVTAEYATSVRALVLRLLEAISESLGLESDHISNILGKHAQHMAFNYYPPCPEPELTYGLPGHKDPTVITVLLQDQVSGLQVFKDDKWVAVSPIPNTFIVNIGDQMQVISNDKYKSVLHRAVVNTENERLSIPTFYFPSTDAVIGPAHELVNEQDSLAIYRTYPFVEYWDKFWNRSLATASCLDAFKAPTT</sequence>
<gene>
    <name evidence="7" type="primary">DLO1</name>
    <name evidence="6" type="synonym">SAG108</name>
    <name evidence="9" type="ordered locus">At4g10500</name>
    <name evidence="10" type="ORF">F3H7.16</name>
    <name evidence="11" type="ORF">F7L13.80</name>
</gene>
<proteinExistence type="evidence at protein level"/>
<reference key="1">
    <citation type="journal article" date="1999" name="Nature">
        <title>Sequence and analysis of chromosome 4 of the plant Arabidopsis thaliana.</title>
        <authorList>
            <person name="Mayer K.F.X."/>
            <person name="Schueller C."/>
            <person name="Wambutt R."/>
            <person name="Murphy G."/>
            <person name="Volckaert G."/>
            <person name="Pohl T."/>
            <person name="Duesterhoeft A."/>
            <person name="Stiekema W."/>
            <person name="Entian K.-D."/>
            <person name="Terryn N."/>
            <person name="Harris B."/>
            <person name="Ansorge W."/>
            <person name="Brandt P."/>
            <person name="Grivell L.A."/>
            <person name="Rieger M."/>
            <person name="Weichselgartner M."/>
            <person name="de Simone V."/>
            <person name="Obermaier B."/>
            <person name="Mache R."/>
            <person name="Mueller M."/>
            <person name="Kreis M."/>
            <person name="Delseny M."/>
            <person name="Puigdomenech P."/>
            <person name="Watson M."/>
            <person name="Schmidtheini T."/>
            <person name="Reichert B."/>
            <person name="Portetelle D."/>
            <person name="Perez-Alonso M."/>
            <person name="Boutry M."/>
            <person name="Bancroft I."/>
            <person name="Vos P."/>
            <person name="Hoheisel J."/>
            <person name="Zimmermann W."/>
            <person name="Wedler H."/>
            <person name="Ridley P."/>
            <person name="Langham S.-A."/>
            <person name="McCullagh B."/>
            <person name="Bilham L."/>
            <person name="Robben J."/>
            <person name="van der Schueren J."/>
            <person name="Grymonprez B."/>
            <person name="Chuang Y.-J."/>
            <person name="Vandenbussche F."/>
            <person name="Braeken M."/>
            <person name="Weltjens I."/>
            <person name="Voet M."/>
            <person name="Bastiaens I."/>
            <person name="Aert R."/>
            <person name="Defoor E."/>
            <person name="Weitzenegger T."/>
            <person name="Bothe G."/>
            <person name="Ramsperger U."/>
            <person name="Hilbert H."/>
            <person name="Braun M."/>
            <person name="Holzer E."/>
            <person name="Brandt A."/>
            <person name="Peters S."/>
            <person name="van Staveren M."/>
            <person name="Dirkse W."/>
            <person name="Mooijman P."/>
            <person name="Klein Lankhorst R."/>
            <person name="Rose M."/>
            <person name="Hauf J."/>
            <person name="Koetter P."/>
            <person name="Berneiser S."/>
            <person name="Hempel S."/>
            <person name="Feldpausch M."/>
            <person name="Lamberth S."/>
            <person name="Van den Daele H."/>
            <person name="De Keyser A."/>
            <person name="Buysshaert C."/>
            <person name="Gielen J."/>
            <person name="Villarroel R."/>
            <person name="De Clercq R."/>
            <person name="van Montagu M."/>
            <person name="Rogers J."/>
            <person name="Cronin A."/>
            <person name="Quail M.A."/>
            <person name="Bray-Allen S."/>
            <person name="Clark L."/>
            <person name="Doggett J."/>
            <person name="Hall S."/>
            <person name="Kay M."/>
            <person name="Lennard N."/>
            <person name="McLay K."/>
            <person name="Mayes R."/>
            <person name="Pettett A."/>
            <person name="Rajandream M.A."/>
            <person name="Lyne M."/>
            <person name="Benes V."/>
            <person name="Rechmann S."/>
            <person name="Borkova D."/>
            <person name="Bloecker H."/>
            <person name="Scharfe M."/>
            <person name="Grimm M."/>
            <person name="Loehnert T.-H."/>
            <person name="Dose S."/>
            <person name="de Haan M."/>
            <person name="Maarse A.C."/>
            <person name="Schaefer M."/>
            <person name="Mueller-Auer S."/>
            <person name="Gabel C."/>
            <person name="Fuchs M."/>
            <person name="Fartmann B."/>
            <person name="Granderath K."/>
            <person name="Dauner D."/>
            <person name="Herzl A."/>
            <person name="Neumann S."/>
            <person name="Argiriou A."/>
            <person name="Vitale D."/>
            <person name="Liguori R."/>
            <person name="Piravandi E."/>
            <person name="Massenet O."/>
            <person name="Quigley F."/>
            <person name="Clabauld G."/>
            <person name="Muendlein A."/>
            <person name="Felber R."/>
            <person name="Schnabl S."/>
            <person name="Hiller R."/>
            <person name="Schmidt W."/>
            <person name="Lecharny A."/>
            <person name="Aubourg S."/>
            <person name="Chefdor F."/>
            <person name="Cooke R."/>
            <person name="Berger C."/>
            <person name="Monfort A."/>
            <person name="Casacuberta E."/>
            <person name="Gibbons T."/>
            <person name="Weber N."/>
            <person name="Vandenbol M."/>
            <person name="Bargues M."/>
            <person name="Terol J."/>
            <person name="Torres A."/>
            <person name="Perez-Perez A."/>
            <person name="Purnelle B."/>
            <person name="Bent E."/>
            <person name="Johnson S."/>
            <person name="Tacon D."/>
            <person name="Jesse T."/>
            <person name="Heijnen L."/>
            <person name="Schwarz S."/>
            <person name="Scholler P."/>
            <person name="Heber S."/>
            <person name="Francs P."/>
            <person name="Bielke C."/>
            <person name="Frishman D."/>
            <person name="Haase D."/>
            <person name="Lemcke K."/>
            <person name="Mewes H.-W."/>
            <person name="Stocker S."/>
            <person name="Zaccaria P."/>
            <person name="Bevan M."/>
            <person name="Wilson R.K."/>
            <person name="de la Bastide M."/>
            <person name="Habermann K."/>
            <person name="Parnell L."/>
            <person name="Dedhia N."/>
            <person name="Gnoj L."/>
            <person name="Schutz K."/>
            <person name="Huang E."/>
            <person name="Spiegel L."/>
            <person name="Sekhon M."/>
            <person name="Murray J."/>
            <person name="Sheet P."/>
            <person name="Cordes M."/>
            <person name="Abu-Threideh J."/>
            <person name="Stoneking T."/>
            <person name="Kalicki J."/>
            <person name="Graves T."/>
            <person name="Harmon G."/>
            <person name="Edwards J."/>
            <person name="Latreille P."/>
            <person name="Courtney L."/>
            <person name="Cloud J."/>
            <person name="Abbott A."/>
            <person name="Scott K."/>
            <person name="Johnson D."/>
            <person name="Minx P."/>
            <person name="Bentley D."/>
            <person name="Fulton B."/>
            <person name="Miller N."/>
            <person name="Greco T."/>
            <person name="Kemp K."/>
            <person name="Kramer J."/>
            <person name="Fulton L."/>
            <person name="Mardis E."/>
            <person name="Dante M."/>
            <person name="Pepin K."/>
            <person name="Hillier L.W."/>
            <person name="Nelson J."/>
            <person name="Spieth J."/>
            <person name="Ryan E."/>
            <person name="Andrews S."/>
            <person name="Geisel C."/>
            <person name="Layman D."/>
            <person name="Du H."/>
            <person name="Ali J."/>
            <person name="Berghoff A."/>
            <person name="Jones K."/>
            <person name="Drone K."/>
            <person name="Cotton M."/>
            <person name="Joshu C."/>
            <person name="Antonoiu B."/>
            <person name="Zidanic M."/>
            <person name="Strong C."/>
            <person name="Sun H."/>
            <person name="Lamar B."/>
            <person name="Yordan C."/>
            <person name="Ma P."/>
            <person name="Zhong J."/>
            <person name="Preston R."/>
            <person name="Vil D."/>
            <person name="Shekher M."/>
            <person name="Matero A."/>
            <person name="Shah R."/>
            <person name="Swaby I.K."/>
            <person name="O'Shaughnessy A."/>
            <person name="Rodriguez M."/>
            <person name="Hoffman J."/>
            <person name="Till S."/>
            <person name="Granat S."/>
            <person name="Shohdy N."/>
            <person name="Hasegawa A."/>
            <person name="Hameed A."/>
            <person name="Lodhi M."/>
            <person name="Johnson A."/>
            <person name="Chen E."/>
            <person name="Marra M.A."/>
            <person name="Martienssen R."/>
            <person name="McCombie W.R."/>
        </authorList>
    </citation>
    <scope>NUCLEOTIDE SEQUENCE [LARGE SCALE GENOMIC DNA]</scope>
    <source>
        <strain>cv. Columbia</strain>
    </source>
</reference>
<reference key="2">
    <citation type="journal article" date="2017" name="Plant J.">
        <title>Araport11: a complete reannotation of the Arabidopsis thaliana reference genome.</title>
        <authorList>
            <person name="Cheng C.Y."/>
            <person name="Krishnakumar V."/>
            <person name="Chan A.P."/>
            <person name="Thibaud-Nissen F."/>
            <person name="Schobel S."/>
            <person name="Town C.D."/>
        </authorList>
    </citation>
    <scope>GENOME REANNOTATION</scope>
    <source>
        <strain>cv. Columbia</strain>
    </source>
</reference>
<reference key="3">
    <citation type="journal article" date="2003" name="Science">
        <title>Empirical analysis of transcriptional activity in the Arabidopsis genome.</title>
        <authorList>
            <person name="Yamada K."/>
            <person name="Lim J."/>
            <person name="Dale J.M."/>
            <person name="Chen H."/>
            <person name="Shinn P."/>
            <person name="Palm C.J."/>
            <person name="Southwick A.M."/>
            <person name="Wu H.C."/>
            <person name="Kim C.J."/>
            <person name="Nguyen M."/>
            <person name="Pham P.K."/>
            <person name="Cheuk R.F."/>
            <person name="Karlin-Newmann G."/>
            <person name="Liu S.X."/>
            <person name="Lam B."/>
            <person name="Sakano H."/>
            <person name="Wu T."/>
            <person name="Yu G."/>
            <person name="Miranda M."/>
            <person name="Quach H.L."/>
            <person name="Tripp M."/>
            <person name="Chang C.H."/>
            <person name="Lee J.M."/>
            <person name="Toriumi M.J."/>
            <person name="Chan M.M."/>
            <person name="Tang C.C."/>
            <person name="Onodera C.S."/>
            <person name="Deng J.M."/>
            <person name="Akiyama K."/>
            <person name="Ansari Y."/>
            <person name="Arakawa T."/>
            <person name="Banh J."/>
            <person name="Banno F."/>
            <person name="Bowser L."/>
            <person name="Brooks S.Y."/>
            <person name="Carninci P."/>
            <person name="Chao Q."/>
            <person name="Choy N."/>
            <person name="Enju A."/>
            <person name="Goldsmith A.D."/>
            <person name="Gurjal M."/>
            <person name="Hansen N.F."/>
            <person name="Hayashizaki Y."/>
            <person name="Johnson-Hopson C."/>
            <person name="Hsuan V.W."/>
            <person name="Iida K."/>
            <person name="Karnes M."/>
            <person name="Khan S."/>
            <person name="Koesema E."/>
            <person name="Ishida J."/>
            <person name="Jiang P.X."/>
            <person name="Jones T."/>
            <person name="Kawai J."/>
            <person name="Kamiya A."/>
            <person name="Meyers C."/>
            <person name="Nakajima M."/>
            <person name="Narusaka M."/>
            <person name="Seki M."/>
            <person name="Sakurai T."/>
            <person name="Satou M."/>
            <person name="Tamse R."/>
            <person name="Vaysberg M."/>
            <person name="Wallender E.K."/>
            <person name="Wong C."/>
            <person name="Yamamura Y."/>
            <person name="Yuan S."/>
            <person name="Shinozaki K."/>
            <person name="Davis R.W."/>
            <person name="Theologis A."/>
            <person name="Ecker J.R."/>
        </authorList>
    </citation>
    <scope>NUCLEOTIDE SEQUENCE [LARGE SCALE MRNA]</scope>
    <source>
        <strain>cv. Columbia</strain>
    </source>
</reference>
<reference key="4">
    <citation type="submission" date="2004-09" db="EMBL/GenBank/DDBJ databases">
        <title>Large-scale analysis of RIKEN Arabidopsis full-length (RAFL) cDNAs.</title>
        <authorList>
            <person name="Totoki Y."/>
            <person name="Seki M."/>
            <person name="Ishida J."/>
            <person name="Nakajima M."/>
            <person name="Enju A."/>
            <person name="Kamiya A."/>
            <person name="Narusaka M."/>
            <person name="Shin-i T."/>
            <person name="Nakagawa M."/>
            <person name="Sakamoto N."/>
            <person name="Oishi K."/>
            <person name="Kohara Y."/>
            <person name="Kobayashi M."/>
            <person name="Toyoda A."/>
            <person name="Sakaki Y."/>
            <person name="Sakurai T."/>
            <person name="Iida K."/>
            <person name="Akiyama K."/>
            <person name="Satou M."/>
            <person name="Toyoda T."/>
            <person name="Konagaya A."/>
            <person name="Carninci P."/>
            <person name="Kawai J."/>
            <person name="Hayashizaki Y."/>
            <person name="Shinozaki K."/>
        </authorList>
    </citation>
    <scope>NUCLEOTIDE SEQUENCE [LARGE SCALE MRNA]</scope>
    <source>
        <strain>cv. Columbia</strain>
    </source>
</reference>
<reference key="5">
    <citation type="journal article" date="2003" name="Science">
        <title>Loss of a callose synthase results in salicylic acid-dependent disease resistance.</title>
        <authorList>
            <person name="Nishimura M.T."/>
            <person name="Stein M."/>
            <person name="Hou B.-H."/>
            <person name="Vogel J.P."/>
            <person name="Edwards H."/>
            <person name="Somerville S.C."/>
        </authorList>
    </citation>
    <scope>INDUCTION BY ERYSIPHE CICHORACEARUM</scope>
</reference>
<reference key="6">
    <citation type="journal article" date="2013" name="Proc. Natl. Acad. Sci. U.S.A.">
        <title>Salicylic acid 3-hydroxylase regulates Arabidopsis leaf longevity by mediating salicylic acid catabolism.</title>
        <authorList>
            <person name="Zhang K."/>
            <person name="Halitschke R."/>
            <person name="Yin C."/>
            <person name="Liu C.J."/>
            <person name="Gan S.S."/>
        </authorList>
    </citation>
    <scope>FUNCTION</scope>
    <scope>DISRUPTION PHENOTYPE</scope>
    <scope>CATALYTIC ACTIVITY</scope>
    <scope>COFACTOR</scope>
    <scope>BIOPHYSICOCHEMICAL PROPERTIES</scope>
    <scope>INDUCTION BY SENESCENCE AND SALICYLIC ACID</scope>
    <source>
        <strain>cv. Columbia</strain>
    </source>
</reference>
<reference key="7">
    <citation type="journal article" date="2015" name="Plant J.">
        <title>DOWNY MILDEW RESISTANT 6 and DMR6-LIKE OXYGENASE 1 are partially redundant but distinct suppressors of immunity in Arabidopsis.</title>
        <authorList>
            <person name="Zeilmaker T."/>
            <person name="Ludwig N.R."/>
            <person name="Elberse J."/>
            <person name="Seidl M.F."/>
            <person name="Berke L."/>
            <person name="Van Doorn A."/>
            <person name="Schuurink R.C."/>
            <person name="Snel B."/>
            <person name="Van den Ackerveken G."/>
        </authorList>
    </citation>
    <scope>FUNCTION</scope>
    <scope>FUNCTION (MICROBIAL INFECTION)</scope>
    <scope>INDUCTION BY PATHOGENS</scope>
    <scope>GENE FAMILY</scope>
    <source>
        <strain>cv. Columbia</strain>
        <strain>cv. Landsberg erecta</strain>
    </source>
</reference>
<evidence type="ECO:0000250" key="1">
    <source>
        <dbReference type="UniProtKB" id="D4N500"/>
    </source>
</evidence>
<evidence type="ECO:0000255" key="2">
    <source>
        <dbReference type="PROSITE-ProRule" id="PRU00805"/>
    </source>
</evidence>
<evidence type="ECO:0000269" key="3">
    <source>
    </source>
</evidence>
<evidence type="ECO:0000269" key="4">
    <source>
    </source>
</evidence>
<evidence type="ECO:0000269" key="5">
    <source>
    </source>
</evidence>
<evidence type="ECO:0000303" key="6">
    <source>
    </source>
</evidence>
<evidence type="ECO:0000303" key="7">
    <source>
    </source>
</evidence>
<evidence type="ECO:0000305" key="8"/>
<evidence type="ECO:0000312" key="9">
    <source>
        <dbReference type="Araport" id="AT4G10500"/>
    </source>
</evidence>
<evidence type="ECO:0000312" key="10">
    <source>
        <dbReference type="EMBL" id="AAD03425.1"/>
    </source>
</evidence>
<evidence type="ECO:0000312" key="11">
    <source>
        <dbReference type="EMBL" id="CAB40043.1"/>
    </source>
</evidence>
<feature type="chain" id="PRO_0000435628" description="Protein DMR6-LIKE OXYGENASE 1">
    <location>
        <begin position="1"/>
        <end position="349"/>
    </location>
</feature>
<feature type="domain" description="Fe2OG dioxygenase" evidence="2">
    <location>
        <begin position="197"/>
        <end position="296"/>
    </location>
</feature>
<feature type="binding site" evidence="1">
    <location>
        <position position="206"/>
    </location>
    <ligand>
        <name>2-oxoglutarate</name>
        <dbReference type="ChEBI" id="CHEBI:16810"/>
    </ligand>
</feature>
<feature type="binding site" evidence="2">
    <location>
        <position position="221"/>
    </location>
    <ligand>
        <name>Fe cation</name>
        <dbReference type="ChEBI" id="CHEBI:24875"/>
    </ligand>
</feature>
<feature type="binding site" evidence="2">
    <location>
        <position position="223"/>
    </location>
    <ligand>
        <name>Fe cation</name>
        <dbReference type="ChEBI" id="CHEBI:24875"/>
    </ligand>
</feature>
<feature type="binding site" evidence="2">
    <location>
        <position position="277"/>
    </location>
    <ligand>
        <name>Fe cation</name>
        <dbReference type="ChEBI" id="CHEBI:24875"/>
    </ligand>
</feature>
<feature type="binding site" evidence="2">
    <location>
        <position position="287"/>
    </location>
    <ligand>
        <name>2-oxoglutarate</name>
        <dbReference type="ChEBI" id="CHEBI:16810"/>
    </ligand>
</feature>
<feature type="binding site" evidence="1">
    <location>
        <position position="289"/>
    </location>
    <ligand>
        <name>2-oxoglutarate</name>
        <dbReference type="ChEBI" id="CHEBI:16810"/>
    </ligand>
</feature>
<protein>
    <recommendedName>
        <fullName evidence="7">Protein DMR6-LIKE OXYGENASE 1</fullName>
        <ecNumber evidence="2">1.14.11.-</ecNumber>
    </recommendedName>
    <alternativeName>
        <fullName evidence="7">2-oxoglutarate (2OG)-Fe(II) oxygenase-like protein DLO1</fullName>
    </alternativeName>
    <alternativeName>
        <fullName evidence="6">Protein SENESCENCE-ASSOCIATED GENE 108</fullName>
    </alternativeName>
    <alternativeName>
        <fullName evidence="6">Salicylate 3-hydroxylase DLO1</fullName>
        <shortName evidence="6">S3H DLO1</shortName>
        <shortName evidence="6">SA 3-hydroxylase DLO1</shortName>
        <shortName evidence="6">Salicylic acid 3-hydroxylase DLO1</shortName>
        <ecNumber evidence="4">1.14.13.-</ecNumber>
    </alternativeName>
</protein>
<comment type="function">
    <text evidence="4 5">Converts salicylic acid (SA) to both 2,3-dihydroxybenzoic acid (2,3-DHBA) and 2,5-DHBA in vitro but only 2,3-DHBA in vivo. Component of a negative feedback regulation system of SA levels during senescence. Regulates both onset and progression of leaf senescence (PubMed:23959884). Negative regulator of defense against Hyaloperonospora arabidopsidis (PubMed:25376907).</text>
</comment>
<comment type="function">
    <text evidence="5">(Microbial infection) Confers susceptibility to the downy mildew pathogen Hyaloperonospora arabidopsidis.</text>
</comment>
<comment type="catalytic activity">
    <reaction evidence="4">
        <text>salicylate + NADH + O2 + H(+) = 2,3-dihydroxybenzoate + NAD(+) + H2O</text>
        <dbReference type="Rhea" id="RHEA:51792"/>
        <dbReference type="ChEBI" id="CHEBI:15377"/>
        <dbReference type="ChEBI" id="CHEBI:15378"/>
        <dbReference type="ChEBI" id="CHEBI:15379"/>
        <dbReference type="ChEBI" id="CHEBI:30762"/>
        <dbReference type="ChEBI" id="CHEBI:36654"/>
        <dbReference type="ChEBI" id="CHEBI:57540"/>
        <dbReference type="ChEBI" id="CHEBI:57945"/>
    </reaction>
</comment>
<comment type="cofactor">
    <cofactor evidence="4">
        <name>L-ascorbate</name>
        <dbReference type="ChEBI" id="CHEBI:38290"/>
    </cofactor>
</comment>
<comment type="cofactor">
    <cofactor evidence="2">
        <name>Fe(2+)</name>
        <dbReference type="ChEBI" id="CHEBI:29033"/>
    </cofactor>
    <text evidence="2">Binds 1 Fe(2+) ion per subunit.</text>
</comment>
<comment type="biophysicochemical properties">
    <kinetics>
        <KM evidence="4">58.29 uM for salicylic acid (at pH 6.0 and 40 degrees Celsius)</KM>
        <Vmax evidence="4">498.0 nmol/min/mg enzyme with salicylic acid as substrate (at pH 6.0 and 40 degrees Celsius)</Vmax>
    </kinetics>
    <phDependence>
        <text evidence="4">Optimum pH is 6.</text>
    </phDependence>
    <temperatureDependence>
        <text evidence="4">Optimum temperature is 40 degrees Celsius.</text>
    </temperatureDependence>
</comment>
<comment type="induction">
    <text evidence="3 4 5">Induced by the powdery mildew pathogen Erysiphe cichoracearum (PubMed:12920300). Accumulates upon infection with the downy mildew Hyaloperonospora arabidopsidis, the powdery mildew Erysiphe orontii, and the bacterium Pseudomonas syringae. Present only in or around the main veins of cotyledons and leaves infected by H. arabidopsidis (PubMed:25376907). Induced by salicylic acid (SA) (PubMed:23959884, PubMed:25376907). Accumulates in senescing leaves (PubMed:23959884).</text>
</comment>
<comment type="disruption phenotype">
    <text evidence="4">Impaired production of 2,3-DHBA sugar conjugates but accumulation of salicylic acid (SA) and its sugar conjugates. Precocious senescence. Enhanced expression of senescence-associated and defense-related genes.</text>
</comment>
<comment type="similarity">
    <text evidence="8">Belongs to the iron/ascorbate-dependent oxidoreductase family.</text>
</comment>
<name>DLO1_ARATH</name>
<keyword id="KW-0223">Dioxygenase</keyword>
<keyword id="KW-0408">Iron</keyword>
<keyword id="KW-0479">Metal-binding</keyword>
<keyword id="KW-0520">NAD</keyword>
<keyword id="KW-0560">Oxidoreductase</keyword>
<keyword id="KW-0611">Plant defense</keyword>
<keyword id="KW-1185">Reference proteome</keyword>